<reference key="1">
    <citation type="journal article" date="2005" name="J. Bacteriol.">
        <title>Whole-genome sequence analysis of Pseudomonas syringae pv. phaseolicola 1448A reveals divergence among pathovars in genes involved in virulence and transposition.</title>
        <authorList>
            <person name="Joardar V."/>
            <person name="Lindeberg M."/>
            <person name="Jackson R.W."/>
            <person name="Selengut J."/>
            <person name="Dodson R."/>
            <person name="Brinkac L.M."/>
            <person name="Daugherty S.C."/>
            <person name="DeBoy R.T."/>
            <person name="Durkin A.S."/>
            <person name="Gwinn Giglio M."/>
            <person name="Madupu R."/>
            <person name="Nelson W.C."/>
            <person name="Rosovitz M.J."/>
            <person name="Sullivan S.A."/>
            <person name="Crabtree J."/>
            <person name="Creasy T."/>
            <person name="Davidsen T.M."/>
            <person name="Haft D.H."/>
            <person name="Zafar N."/>
            <person name="Zhou L."/>
            <person name="Halpin R."/>
            <person name="Holley T."/>
            <person name="Khouri H.M."/>
            <person name="Feldblyum T.V."/>
            <person name="White O."/>
            <person name="Fraser C.M."/>
            <person name="Chatterjee A.K."/>
            <person name="Cartinhour S."/>
            <person name="Schneider D."/>
            <person name="Mansfield J.W."/>
            <person name="Collmer A."/>
            <person name="Buell R."/>
        </authorList>
    </citation>
    <scope>NUCLEOTIDE SEQUENCE [LARGE SCALE GENOMIC DNA]</scope>
    <source>
        <strain>1448A / Race 6</strain>
    </source>
</reference>
<accession>Q48NN3</accession>
<name>SYY_PSE14</name>
<keyword id="KW-0030">Aminoacyl-tRNA synthetase</keyword>
<keyword id="KW-0067">ATP-binding</keyword>
<keyword id="KW-0963">Cytoplasm</keyword>
<keyword id="KW-0436">Ligase</keyword>
<keyword id="KW-0547">Nucleotide-binding</keyword>
<keyword id="KW-0648">Protein biosynthesis</keyword>
<keyword id="KW-0694">RNA-binding</keyword>
<gene>
    <name evidence="1" type="primary">tyrS</name>
    <name type="ordered locus">PSPPH_0688</name>
</gene>
<protein>
    <recommendedName>
        <fullName evidence="1">Tyrosine--tRNA ligase</fullName>
        <ecNumber evidence="1">6.1.1.1</ecNumber>
    </recommendedName>
    <alternativeName>
        <fullName evidence="1">Tyrosyl-tRNA synthetase</fullName>
        <shortName evidence="1">TyrRS</shortName>
    </alternativeName>
</protein>
<feature type="chain" id="PRO_0000236754" description="Tyrosine--tRNA ligase">
    <location>
        <begin position="1"/>
        <end position="403"/>
    </location>
</feature>
<feature type="domain" description="S4 RNA-binding" evidence="1">
    <location>
        <begin position="336"/>
        <end position="396"/>
    </location>
</feature>
<feature type="short sequence motif" description="'HIGH' region">
    <location>
        <begin position="42"/>
        <end position="51"/>
    </location>
</feature>
<feature type="short sequence motif" description="'KMSKS' region">
    <location>
        <begin position="226"/>
        <end position="230"/>
    </location>
</feature>
<feature type="binding site" evidence="1">
    <location>
        <position position="229"/>
    </location>
    <ligand>
        <name>ATP</name>
        <dbReference type="ChEBI" id="CHEBI:30616"/>
    </ligand>
</feature>
<comment type="function">
    <text evidence="1">Catalyzes the attachment of tyrosine to tRNA(Tyr) in a two-step reaction: tyrosine is first activated by ATP to form Tyr-AMP and then transferred to the acceptor end of tRNA(Tyr).</text>
</comment>
<comment type="catalytic activity">
    <reaction evidence="1">
        <text>tRNA(Tyr) + L-tyrosine + ATP = L-tyrosyl-tRNA(Tyr) + AMP + diphosphate + H(+)</text>
        <dbReference type="Rhea" id="RHEA:10220"/>
        <dbReference type="Rhea" id="RHEA-COMP:9706"/>
        <dbReference type="Rhea" id="RHEA-COMP:9707"/>
        <dbReference type="ChEBI" id="CHEBI:15378"/>
        <dbReference type="ChEBI" id="CHEBI:30616"/>
        <dbReference type="ChEBI" id="CHEBI:33019"/>
        <dbReference type="ChEBI" id="CHEBI:58315"/>
        <dbReference type="ChEBI" id="CHEBI:78442"/>
        <dbReference type="ChEBI" id="CHEBI:78536"/>
        <dbReference type="ChEBI" id="CHEBI:456215"/>
        <dbReference type="EC" id="6.1.1.1"/>
    </reaction>
</comment>
<comment type="subunit">
    <text evidence="1">Homodimer.</text>
</comment>
<comment type="subcellular location">
    <subcellularLocation>
        <location evidence="1">Cytoplasm</location>
    </subcellularLocation>
</comment>
<comment type="similarity">
    <text evidence="1">Belongs to the class-I aminoacyl-tRNA synthetase family. TyrS type 2 subfamily.</text>
</comment>
<sequence>MKSVEEQLALIKRGADELLVEAELVEKLKRGQPLRIKAGFDPTAPDLHLGHTVLINKLRQFQDLGHQIIFLIGDFTGMIGDPSGKSATRPPLTREQVLDYAETYKSQVFKILDPAKTEVAFNSTWMDKLSPADFIRLSSQYTVARMLERDDFDKRYKSNQSIAIHEFLYPLVQGYDSVALKADVELGGTDQKFNLLMGRELQRAYGQEPQCILTMPLLEGLDGVKKMSKSLGNYVGIQEAPGIMYSKLVSIPDSLMWRYFELLSFRSMEEINGLKADCEAGANPRDIKIKLAEELVARFHGEEAAANAHRSAGNRMKEGELPDDLPEISVAAIEDMPISAVLNKAGLVKNAAVARDLLASGGVRIDGEVVDRGFVFKLGATHVCQAGKKAFGRVTLVSEESSK</sequence>
<evidence type="ECO:0000255" key="1">
    <source>
        <dbReference type="HAMAP-Rule" id="MF_02007"/>
    </source>
</evidence>
<organism>
    <name type="scientific">Pseudomonas savastanoi pv. phaseolicola (strain 1448A / Race 6)</name>
    <name type="common">Pseudomonas syringae pv. phaseolicola (strain 1448A / Race 6)</name>
    <dbReference type="NCBI Taxonomy" id="264730"/>
    <lineage>
        <taxon>Bacteria</taxon>
        <taxon>Pseudomonadati</taxon>
        <taxon>Pseudomonadota</taxon>
        <taxon>Gammaproteobacteria</taxon>
        <taxon>Pseudomonadales</taxon>
        <taxon>Pseudomonadaceae</taxon>
        <taxon>Pseudomonas</taxon>
    </lineage>
</organism>
<proteinExistence type="inferred from homology"/>
<dbReference type="EC" id="6.1.1.1" evidence="1"/>
<dbReference type="EMBL" id="CP000058">
    <property type="protein sequence ID" value="AAZ37717.1"/>
    <property type="molecule type" value="Genomic_DNA"/>
</dbReference>
<dbReference type="RefSeq" id="WP_011167630.1">
    <property type="nucleotide sequence ID" value="NC_005773.3"/>
</dbReference>
<dbReference type="SMR" id="Q48NN3"/>
<dbReference type="KEGG" id="psp:PSPPH_0688"/>
<dbReference type="eggNOG" id="COG0162">
    <property type="taxonomic scope" value="Bacteria"/>
</dbReference>
<dbReference type="HOGENOM" id="CLU_024003_5_0_6"/>
<dbReference type="Proteomes" id="UP000000551">
    <property type="component" value="Chromosome"/>
</dbReference>
<dbReference type="GO" id="GO:0005829">
    <property type="term" value="C:cytosol"/>
    <property type="evidence" value="ECO:0007669"/>
    <property type="project" value="TreeGrafter"/>
</dbReference>
<dbReference type="GO" id="GO:0005524">
    <property type="term" value="F:ATP binding"/>
    <property type="evidence" value="ECO:0007669"/>
    <property type="project" value="UniProtKB-UniRule"/>
</dbReference>
<dbReference type="GO" id="GO:0003723">
    <property type="term" value="F:RNA binding"/>
    <property type="evidence" value="ECO:0007669"/>
    <property type="project" value="UniProtKB-KW"/>
</dbReference>
<dbReference type="GO" id="GO:0004831">
    <property type="term" value="F:tyrosine-tRNA ligase activity"/>
    <property type="evidence" value="ECO:0007669"/>
    <property type="project" value="UniProtKB-UniRule"/>
</dbReference>
<dbReference type="GO" id="GO:0006437">
    <property type="term" value="P:tyrosyl-tRNA aminoacylation"/>
    <property type="evidence" value="ECO:0007669"/>
    <property type="project" value="UniProtKB-UniRule"/>
</dbReference>
<dbReference type="CDD" id="cd00165">
    <property type="entry name" value="S4"/>
    <property type="match status" value="1"/>
</dbReference>
<dbReference type="CDD" id="cd00805">
    <property type="entry name" value="TyrRS_core"/>
    <property type="match status" value="1"/>
</dbReference>
<dbReference type="FunFam" id="1.10.240.10:FF:000006">
    <property type="entry name" value="Tyrosine--tRNA ligase"/>
    <property type="match status" value="1"/>
</dbReference>
<dbReference type="FunFam" id="3.40.50.620:FF:000061">
    <property type="entry name" value="Tyrosine--tRNA ligase"/>
    <property type="match status" value="1"/>
</dbReference>
<dbReference type="Gene3D" id="3.40.50.620">
    <property type="entry name" value="HUPs"/>
    <property type="match status" value="1"/>
</dbReference>
<dbReference type="Gene3D" id="3.10.290.10">
    <property type="entry name" value="RNA-binding S4 domain"/>
    <property type="match status" value="1"/>
</dbReference>
<dbReference type="Gene3D" id="1.10.240.10">
    <property type="entry name" value="Tyrosyl-Transfer RNA Synthetase"/>
    <property type="match status" value="1"/>
</dbReference>
<dbReference type="HAMAP" id="MF_02007">
    <property type="entry name" value="Tyr_tRNA_synth_type2"/>
    <property type="match status" value="1"/>
</dbReference>
<dbReference type="InterPro" id="IPR001412">
    <property type="entry name" value="aa-tRNA-synth_I_CS"/>
</dbReference>
<dbReference type="InterPro" id="IPR002305">
    <property type="entry name" value="aa-tRNA-synth_Ic"/>
</dbReference>
<dbReference type="InterPro" id="IPR014729">
    <property type="entry name" value="Rossmann-like_a/b/a_fold"/>
</dbReference>
<dbReference type="InterPro" id="IPR002942">
    <property type="entry name" value="S4_RNA-bd"/>
</dbReference>
<dbReference type="InterPro" id="IPR036986">
    <property type="entry name" value="S4_RNA-bd_sf"/>
</dbReference>
<dbReference type="InterPro" id="IPR002307">
    <property type="entry name" value="Tyr-tRNA-ligase"/>
</dbReference>
<dbReference type="InterPro" id="IPR024088">
    <property type="entry name" value="Tyr-tRNA-ligase_bac-type"/>
</dbReference>
<dbReference type="InterPro" id="IPR024108">
    <property type="entry name" value="Tyr-tRNA-ligase_bac_2"/>
</dbReference>
<dbReference type="NCBIfam" id="TIGR00234">
    <property type="entry name" value="tyrS"/>
    <property type="match status" value="1"/>
</dbReference>
<dbReference type="PANTHER" id="PTHR11766:SF1">
    <property type="entry name" value="TYROSINE--TRNA LIGASE"/>
    <property type="match status" value="1"/>
</dbReference>
<dbReference type="PANTHER" id="PTHR11766">
    <property type="entry name" value="TYROSYL-TRNA SYNTHETASE"/>
    <property type="match status" value="1"/>
</dbReference>
<dbReference type="Pfam" id="PF01479">
    <property type="entry name" value="S4"/>
    <property type="match status" value="1"/>
</dbReference>
<dbReference type="Pfam" id="PF00579">
    <property type="entry name" value="tRNA-synt_1b"/>
    <property type="match status" value="1"/>
</dbReference>
<dbReference type="PRINTS" id="PR01040">
    <property type="entry name" value="TRNASYNTHTYR"/>
</dbReference>
<dbReference type="SUPFAM" id="SSF55174">
    <property type="entry name" value="Alpha-L RNA-binding motif"/>
    <property type="match status" value="1"/>
</dbReference>
<dbReference type="SUPFAM" id="SSF52374">
    <property type="entry name" value="Nucleotidylyl transferase"/>
    <property type="match status" value="1"/>
</dbReference>
<dbReference type="PROSITE" id="PS00178">
    <property type="entry name" value="AA_TRNA_LIGASE_I"/>
    <property type="match status" value="1"/>
</dbReference>
<dbReference type="PROSITE" id="PS50889">
    <property type="entry name" value="S4"/>
    <property type="match status" value="1"/>
</dbReference>